<comment type="function">
    <text evidence="1">This protein binds to 23S rRNA in the presence of protein L20.</text>
</comment>
<comment type="subunit">
    <text evidence="1">Part of the 50S ribosomal subunit. Contacts protein L20.</text>
</comment>
<comment type="similarity">
    <text evidence="1">Belongs to the bacterial ribosomal protein bL21 family.</text>
</comment>
<dbReference type="EMBL" id="AP011115">
    <property type="protein sequence ID" value="BAH49282.1"/>
    <property type="molecule type" value="Genomic_DNA"/>
</dbReference>
<dbReference type="RefSeq" id="WP_005248081.1">
    <property type="nucleotide sequence ID" value="NC_012522.1"/>
</dbReference>
<dbReference type="SMR" id="C1AVK2"/>
<dbReference type="STRING" id="632772.ROP_10350"/>
<dbReference type="GeneID" id="69892974"/>
<dbReference type="KEGG" id="rop:ROP_10350"/>
<dbReference type="PATRIC" id="fig|632772.20.peg.1101"/>
<dbReference type="HOGENOM" id="CLU_061463_3_0_11"/>
<dbReference type="OrthoDB" id="9813334at2"/>
<dbReference type="Proteomes" id="UP000002212">
    <property type="component" value="Chromosome"/>
</dbReference>
<dbReference type="GO" id="GO:0005737">
    <property type="term" value="C:cytoplasm"/>
    <property type="evidence" value="ECO:0007669"/>
    <property type="project" value="UniProtKB-ARBA"/>
</dbReference>
<dbReference type="GO" id="GO:1990904">
    <property type="term" value="C:ribonucleoprotein complex"/>
    <property type="evidence" value="ECO:0007669"/>
    <property type="project" value="UniProtKB-KW"/>
</dbReference>
<dbReference type="GO" id="GO:0005840">
    <property type="term" value="C:ribosome"/>
    <property type="evidence" value="ECO:0007669"/>
    <property type="project" value="UniProtKB-KW"/>
</dbReference>
<dbReference type="GO" id="GO:0019843">
    <property type="term" value="F:rRNA binding"/>
    <property type="evidence" value="ECO:0007669"/>
    <property type="project" value="UniProtKB-UniRule"/>
</dbReference>
<dbReference type="GO" id="GO:0003735">
    <property type="term" value="F:structural constituent of ribosome"/>
    <property type="evidence" value="ECO:0007669"/>
    <property type="project" value="InterPro"/>
</dbReference>
<dbReference type="GO" id="GO:0006412">
    <property type="term" value="P:translation"/>
    <property type="evidence" value="ECO:0007669"/>
    <property type="project" value="UniProtKB-UniRule"/>
</dbReference>
<dbReference type="HAMAP" id="MF_01363">
    <property type="entry name" value="Ribosomal_bL21"/>
    <property type="match status" value="1"/>
</dbReference>
<dbReference type="InterPro" id="IPR028909">
    <property type="entry name" value="bL21-like"/>
</dbReference>
<dbReference type="InterPro" id="IPR036164">
    <property type="entry name" value="bL21-like_sf"/>
</dbReference>
<dbReference type="InterPro" id="IPR001787">
    <property type="entry name" value="Ribosomal_bL21"/>
</dbReference>
<dbReference type="InterPro" id="IPR018258">
    <property type="entry name" value="Ribosomal_bL21_CS"/>
</dbReference>
<dbReference type="NCBIfam" id="TIGR00061">
    <property type="entry name" value="L21"/>
    <property type="match status" value="1"/>
</dbReference>
<dbReference type="PANTHER" id="PTHR21349">
    <property type="entry name" value="50S RIBOSOMAL PROTEIN L21"/>
    <property type="match status" value="1"/>
</dbReference>
<dbReference type="PANTHER" id="PTHR21349:SF0">
    <property type="entry name" value="LARGE RIBOSOMAL SUBUNIT PROTEIN BL21M"/>
    <property type="match status" value="1"/>
</dbReference>
<dbReference type="Pfam" id="PF00829">
    <property type="entry name" value="Ribosomal_L21p"/>
    <property type="match status" value="1"/>
</dbReference>
<dbReference type="SUPFAM" id="SSF141091">
    <property type="entry name" value="L21p-like"/>
    <property type="match status" value="1"/>
</dbReference>
<dbReference type="PROSITE" id="PS01169">
    <property type="entry name" value="RIBOSOMAL_L21"/>
    <property type="match status" value="1"/>
</dbReference>
<accession>C1AVK2</accession>
<keyword id="KW-0687">Ribonucleoprotein</keyword>
<keyword id="KW-0689">Ribosomal protein</keyword>
<keyword id="KW-0694">RNA-binding</keyword>
<keyword id="KW-0699">rRNA-binding</keyword>
<organism>
    <name type="scientific">Rhodococcus opacus (strain B4)</name>
    <dbReference type="NCBI Taxonomy" id="632772"/>
    <lineage>
        <taxon>Bacteria</taxon>
        <taxon>Bacillati</taxon>
        <taxon>Actinomycetota</taxon>
        <taxon>Actinomycetes</taxon>
        <taxon>Mycobacteriales</taxon>
        <taxon>Nocardiaceae</taxon>
        <taxon>Rhodococcus</taxon>
    </lineage>
</organism>
<feature type="chain" id="PRO_1000166737" description="Large ribosomal subunit protein bL21">
    <location>
        <begin position="1"/>
        <end position="103"/>
    </location>
</feature>
<proteinExistence type="inferred from homology"/>
<sequence length="103" mass="11121">MATYAIVKTGGKQYKVAVGDLVKVEKIEGEPGTAVSLAPVLVVDGSDLTTDADKLAKISVTGEVVEHTKGPKIRIHKFKNKTGYHKRQGHRQKLTVLKVTGIK</sequence>
<protein>
    <recommendedName>
        <fullName evidence="1">Large ribosomal subunit protein bL21</fullName>
    </recommendedName>
    <alternativeName>
        <fullName evidence="2">50S ribosomal protein L21</fullName>
    </alternativeName>
</protein>
<name>RL21_RHOOB</name>
<reference key="1">
    <citation type="submission" date="2009-03" db="EMBL/GenBank/DDBJ databases">
        <title>Comparison of the complete genome sequences of Rhodococcus erythropolis PR4 and Rhodococcus opacus B4.</title>
        <authorList>
            <person name="Takarada H."/>
            <person name="Sekine M."/>
            <person name="Hosoyama A."/>
            <person name="Yamada R."/>
            <person name="Fujisawa T."/>
            <person name="Omata S."/>
            <person name="Shimizu A."/>
            <person name="Tsukatani N."/>
            <person name="Tanikawa S."/>
            <person name="Fujita N."/>
            <person name="Harayama S."/>
        </authorList>
    </citation>
    <scope>NUCLEOTIDE SEQUENCE [LARGE SCALE GENOMIC DNA]</scope>
    <source>
        <strain>B4</strain>
    </source>
</reference>
<gene>
    <name evidence="1" type="primary">rplU</name>
    <name type="ordered locus">ROP_10350</name>
</gene>
<evidence type="ECO:0000255" key="1">
    <source>
        <dbReference type="HAMAP-Rule" id="MF_01363"/>
    </source>
</evidence>
<evidence type="ECO:0000305" key="2"/>